<protein>
    <recommendedName>
        <fullName>Blue copper protein</fullName>
    </recommendedName>
    <alternativeName>
        <fullName>Blue copper-binding protein</fullName>
        <shortName>AtBCB</shortName>
    </alternativeName>
    <alternativeName>
        <fullName>Phytocyanin 1</fullName>
    </alternativeName>
    <alternativeName>
        <fullName>Stellacyanin</fullName>
    </alternativeName>
</protein>
<sequence>MAGVFKTVTFLVLVFAAVVVFAEDYDVGDDTEWTRPMDPEFYTTWATGKTFRVGDELEFDFAAGRHDVAVVSEAAFENCEKEKPISHMTVPPVKIMLNTTGPQYFICTVGDHCRFGQKLSITVVAAGATGGATPGAGATPAPGSTPSTGGTTPPTAGGTTTPSGSSGTTTPAGNAASSLGGATFLVAFVSAVVALF</sequence>
<accession>Q07488</accession>
<accession>O82664</accession>
<reference key="1">
    <citation type="journal article" date="1993" name="Gene">
        <title>A negatively light-regulated gene from Arabidopsis thaliana encodes a protein showing high similarity to blue copper-binding proteins.</title>
        <authorList>
            <person name="van Gysel A."/>
            <person name="van Montagu M."/>
            <person name="Inze D."/>
        </authorList>
    </citation>
    <scope>NUCLEOTIDE SEQUENCE [GENOMIC DNA]</scope>
    <source>
        <strain>cv. Columbia</strain>
        <strain>cv. Columbia K85</strain>
    </source>
</reference>
<reference key="2">
    <citation type="submission" date="1998-10" db="EMBL/GenBank/DDBJ databases">
        <title>Characterization of a wound-inducible Arabidopsis gene encoding a protein homologous to blue copper binding proteins.</title>
        <authorList>
            <person name="Yang K.Y."/>
            <person name="Kim C.S."/>
            <person name="Cho B.H."/>
        </authorList>
    </citation>
    <scope>NUCLEOTIDE SEQUENCE [MRNA]</scope>
    <source>
        <strain>cv. Wassilewskija</strain>
    </source>
</reference>
<reference key="3">
    <citation type="journal article" date="2000" name="Development">
        <title>The Arabidopsis floral homeotic gene PISTILLATA is regulated by discrete cis-elements responsive to induction and maintenance signals.</title>
        <authorList>
            <person name="Honma T."/>
            <person name="Goto K."/>
        </authorList>
    </citation>
    <scope>NUCLEOTIDE SEQUENCE [GENOMIC DNA]</scope>
    <source>
        <strain>cv. Landsberg erecta</strain>
    </source>
</reference>
<reference key="4">
    <citation type="journal article" date="2000" name="Nature">
        <title>Sequence and analysis of chromosome 5 of the plant Arabidopsis thaliana.</title>
        <authorList>
            <person name="Tabata S."/>
            <person name="Kaneko T."/>
            <person name="Nakamura Y."/>
            <person name="Kotani H."/>
            <person name="Kato T."/>
            <person name="Asamizu E."/>
            <person name="Miyajima N."/>
            <person name="Sasamoto S."/>
            <person name="Kimura T."/>
            <person name="Hosouchi T."/>
            <person name="Kawashima K."/>
            <person name="Kohara M."/>
            <person name="Matsumoto M."/>
            <person name="Matsuno A."/>
            <person name="Muraki A."/>
            <person name="Nakayama S."/>
            <person name="Nakazaki N."/>
            <person name="Naruo K."/>
            <person name="Okumura S."/>
            <person name="Shinpo S."/>
            <person name="Takeuchi C."/>
            <person name="Wada T."/>
            <person name="Watanabe A."/>
            <person name="Yamada M."/>
            <person name="Yasuda M."/>
            <person name="Sato S."/>
            <person name="de la Bastide M."/>
            <person name="Huang E."/>
            <person name="Spiegel L."/>
            <person name="Gnoj L."/>
            <person name="O'Shaughnessy A."/>
            <person name="Preston R."/>
            <person name="Habermann K."/>
            <person name="Murray J."/>
            <person name="Johnson D."/>
            <person name="Rohlfing T."/>
            <person name="Nelson J."/>
            <person name="Stoneking T."/>
            <person name="Pepin K."/>
            <person name="Spieth J."/>
            <person name="Sekhon M."/>
            <person name="Armstrong J."/>
            <person name="Becker M."/>
            <person name="Belter E."/>
            <person name="Cordum H."/>
            <person name="Cordes M."/>
            <person name="Courtney L."/>
            <person name="Courtney W."/>
            <person name="Dante M."/>
            <person name="Du H."/>
            <person name="Edwards J."/>
            <person name="Fryman J."/>
            <person name="Haakensen B."/>
            <person name="Lamar E."/>
            <person name="Latreille P."/>
            <person name="Leonard S."/>
            <person name="Meyer R."/>
            <person name="Mulvaney E."/>
            <person name="Ozersky P."/>
            <person name="Riley A."/>
            <person name="Strowmatt C."/>
            <person name="Wagner-McPherson C."/>
            <person name="Wollam A."/>
            <person name="Yoakum M."/>
            <person name="Bell M."/>
            <person name="Dedhia N."/>
            <person name="Parnell L."/>
            <person name="Shah R."/>
            <person name="Rodriguez M."/>
            <person name="Hoon See L."/>
            <person name="Vil D."/>
            <person name="Baker J."/>
            <person name="Kirchoff K."/>
            <person name="Toth K."/>
            <person name="King L."/>
            <person name="Bahret A."/>
            <person name="Miller B."/>
            <person name="Marra M.A."/>
            <person name="Martienssen R."/>
            <person name="McCombie W.R."/>
            <person name="Wilson R.K."/>
            <person name="Murphy G."/>
            <person name="Bancroft I."/>
            <person name="Volckaert G."/>
            <person name="Wambutt R."/>
            <person name="Duesterhoeft A."/>
            <person name="Stiekema W."/>
            <person name="Pohl T."/>
            <person name="Entian K.-D."/>
            <person name="Terryn N."/>
            <person name="Hartley N."/>
            <person name="Bent E."/>
            <person name="Johnson S."/>
            <person name="Langham S.-A."/>
            <person name="McCullagh B."/>
            <person name="Robben J."/>
            <person name="Grymonprez B."/>
            <person name="Zimmermann W."/>
            <person name="Ramsperger U."/>
            <person name="Wedler H."/>
            <person name="Balke K."/>
            <person name="Wedler E."/>
            <person name="Peters S."/>
            <person name="van Staveren M."/>
            <person name="Dirkse W."/>
            <person name="Mooijman P."/>
            <person name="Klein Lankhorst R."/>
            <person name="Weitzenegger T."/>
            <person name="Bothe G."/>
            <person name="Rose M."/>
            <person name="Hauf J."/>
            <person name="Berneiser S."/>
            <person name="Hempel S."/>
            <person name="Feldpausch M."/>
            <person name="Lamberth S."/>
            <person name="Villarroel R."/>
            <person name="Gielen J."/>
            <person name="Ardiles W."/>
            <person name="Bents O."/>
            <person name="Lemcke K."/>
            <person name="Kolesov G."/>
            <person name="Mayer K.F.X."/>
            <person name="Rudd S."/>
            <person name="Schoof H."/>
            <person name="Schueller C."/>
            <person name="Zaccaria P."/>
            <person name="Mewes H.-W."/>
            <person name="Bevan M."/>
            <person name="Fransz P.F."/>
        </authorList>
    </citation>
    <scope>NUCLEOTIDE SEQUENCE [LARGE SCALE GENOMIC DNA]</scope>
    <source>
        <strain>cv. Columbia</strain>
    </source>
</reference>
<reference key="5">
    <citation type="journal article" date="2017" name="Plant J.">
        <title>Araport11: a complete reannotation of the Arabidopsis thaliana reference genome.</title>
        <authorList>
            <person name="Cheng C.Y."/>
            <person name="Krishnakumar V."/>
            <person name="Chan A.P."/>
            <person name="Thibaud-Nissen F."/>
            <person name="Schobel S."/>
            <person name="Town C.D."/>
        </authorList>
    </citation>
    <scope>GENOME REANNOTATION</scope>
    <source>
        <strain>cv. Columbia</strain>
    </source>
</reference>
<reference key="6">
    <citation type="journal article" date="2003" name="Science">
        <title>Empirical analysis of transcriptional activity in the Arabidopsis genome.</title>
        <authorList>
            <person name="Yamada K."/>
            <person name="Lim J."/>
            <person name="Dale J.M."/>
            <person name="Chen H."/>
            <person name="Shinn P."/>
            <person name="Palm C.J."/>
            <person name="Southwick A.M."/>
            <person name="Wu H.C."/>
            <person name="Kim C.J."/>
            <person name="Nguyen M."/>
            <person name="Pham P.K."/>
            <person name="Cheuk R.F."/>
            <person name="Karlin-Newmann G."/>
            <person name="Liu S.X."/>
            <person name="Lam B."/>
            <person name="Sakano H."/>
            <person name="Wu T."/>
            <person name="Yu G."/>
            <person name="Miranda M."/>
            <person name="Quach H.L."/>
            <person name="Tripp M."/>
            <person name="Chang C.H."/>
            <person name="Lee J.M."/>
            <person name="Toriumi M.J."/>
            <person name="Chan M.M."/>
            <person name="Tang C.C."/>
            <person name="Onodera C.S."/>
            <person name="Deng J.M."/>
            <person name="Akiyama K."/>
            <person name="Ansari Y."/>
            <person name="Arakawa T."/>
            <person name="Banh J."/>
            <person name="Banno F."/>
            <person name="Bowser L."/>
            <person name="Brooks S.Y."/>
            <person name="Carninci P."/>
            <person name="Chao Q."/>
            <person name="Choy N."/>
            <person name="Enju A."/>
            <person name="Goldsmith A.D."/>
            <person name="Gurjal M."/>
            <person name="Hansen N.F."/>
            <person name="Hayashizaki Y."/>
            <person name="Johnson-Hopson C."/>
            <person name="Hsuan V.W."/>
            <person name="Iida K."/>
            <person name="Karnes M."/>
            <person name="Khan S."/>
            <person name="Koesema E."/>
            <person name="Ishida J."/>
            <person name="Jiang P.X."/>
            <person name="Jones T."/>
            <person name="Kawai J."/>
            <person name="Kamiya A."/>
            <person name="Meyers C."/>
            <person name="Nakajima M."/>
            <person name="Narusaka M."/>
            <person name="Seki M."/>
            <person name="Sakurai T."/>
            <person name="Satou M."/>
            <person name="Tamse R."/>
            <person name="Vaysberg M."/>
            <person name="Wallender E.K."/>
            <person name="Wong C."/>
            <person name="Yamamura Y."/>
            <person name="Yuan S."/>
            <person name="Shinozaki K."/>
            <person name="Davis R.W."/>
            <person name="Theologis A."/>
            <person name="Ecker J.R."/>
        </authorList>
    </citation>
    <scope>NUCLEOTIDE SEQUENCE [LARGE SCALE MRNA]</scope>
    <source>
        <strain>cv. Columbia</strain>
    </source>
</reference>
<reference key="7">
    <citation type="submission" date="2002-03" db="EMBL/GenBank/DDBJ databases">
        <title>Full-length cDNA from Arabidopsis thaliana.</title>
        <authorList>
            <person name="Brover V.V."/>
            <person name="Troukhan M.E."/>
            <person name="Alexandrov N.A."/>
            <person name="Lu Y.-P."/>
            <person name="Flavell R.B."/>
            <person name="Feldmann K.A."/>
        </authorList>
    </citation>
    <scope>NUCLEOTIDE SEQUENCE [LARGE SCALE MRNA]</scope>
</reference>
<reference key="8">
    <citation type="journal article" date="1998" name="Protein Sci.">
        <title>Uclacyanins, stellacyanins, and plantacyanins are distinct subfamilies of phytocyanins: plant-specific mononuclear blue copper proteins.</title>
        <authorList>
            <person name="Nersissian A.M."/>
            <person name="Immoos C."/>
            <person name="Hill M.G."/>
            <person name="Hart P.J."/>
            <person name="Williams G."/>
            <person name="Herrmann R.G."/>
            <person name="Valentine J.S."/>
        </authorList>
    </citation>
    <scope>GENE FAMILY</scope>
    <scope>NOMENCLATURE</scope>
</reference>
<comment type="function">
    <text>Probably acts as an electron carrier.</text>
</comment>
<comment type="subcellular location">
    <subcellularLocation>
        <location>Cell membrane</location>
        <topology>Lipid-anchor</topology>
        <topology>GPI-anchor</topology>
    </subcellularLocation>
</comment>
<comment type="developmental stage">
    <text>Maximum levels are found in 35 day old plantlets when the rosette is mature, consisting of 8-10 fully expanded leaves, and as the floral stem starts to form. This level remains constant during the further life span of the plant.</text>
</comment>
<comment type="induction">
    <text>By dark adaptation. This gives a 20-fold increase in expression.</text>
</comment>
<name>BCB1_ARATH</name>
<gene>
    <name type="primary">BCB</name>
    <name type="synonym">AWI 32</name>
    <name type="ordered locus">At5g20230</name>
    <name type="ORF">F5O24.120</name>
</gene>
<proteinExistence type="evidence at transcript level"/>
<evidence type="ECO:0000255" key="1"/>
<evidence type="ECO:0000255" key="2">
    <source>
        <dbReference type="PROSITE-ProRule" id="PRU00818"/>
    </source>
</evidence>
<evidence type="ECO:0000256" key="3">
    <source>
        <dbReference type="SAM" id="MobiDB-lite"/>
    </source>
</evidence>
<evidence type="ECO:0000305" key="4"/>
<organism>
    <name type="scientific">Arabidopsis thaliana</name>
    <name type="common">Mouse-ear cress</name>
    <dbReference type="NCBI Taxonomy" id="3702"/>
    <lineage>
        <taxon>Eukaryota</taxon>
        <taxon>Viridiplantae</taxon>
        <taxon>Streptophyta</taxon>
        <taxon>Embryophyta</taxon>
        <taxon>Tracheophyta</taxon>
        <taxon>Spermatophyta</taxon>
        <taxon>Magnoliopsida</taxon>
        <taxon>eudicotyledons</taxon>
        <taxon>Gunneridae</taxon>
        <taxon>Pentapetalae</taxon>
        <taxon>rosids</taxon>
        <taxon>malvids</taxon>
        <taxon>Brassicales</taxon>
        <taxon>Brassicaceae</taxon>
        <taxon>Camelineae</taxon>
        <taxon>Arabidopsis</taxon>
    </lineage>
</organism>
<keyword id="KW-1003">Cell membrane</keyword>
<keyword id="KW-0186">Copper</keyword>
<keyword id="KW-1015">Disulfide bond</keyword>
<keyword id="KW-0249">Electron transport</keyword>
<keyword id="KW-0325">Glycoprotein</keyword>
<keyword id="KW-0336">GPI-anchor</keyword>
<keyword id="KW-0449">Lipoprotein</keyword>
<keyword id="KW-0472">Membrane</keyword>
<keyword id="KW-0479">Metal-binding</keyword>
<keyword id="KW-1185">Reference proteome</keyword>
<keyword id="KW-0732">Signal</keyword>
<keyword id="KW-0813">Transport</keyword>
<dbReference type="EMBL" id="Z15058">
    <property type="protein sequence ID" value="CAA78771.1"/>
    <property type="molecule type" value="Genomic_DNA"/>
</dbReference>
<dbReference type="EMBL" id="Y18227">
    <property type="protein sequence ID" value="CAA77089.1"/>
    <property type="molecule type" value="mRNA"/>
</dbReference>
<dbReference type="EMBL" id="AB035137">
    <property type="protein sequence ID" value="BAA86999.1"/>
    <property type="molecule type" value="Genomic_DNA"/>
</dbReference>
<dbReference type="EMBL" id="AF296825">
    <property type="status" value="NOT_ANNOTATED_CDS"/>
    <property type="molecule type" value="Genomic_DNA"/>
</dbReference>
<dbReference type="EMBL" id="CP002688">
    <property type="protein sequence ID" value="AED92816.1"/>
    <property type="molecule type" value="Genomic_DNA"/>
</dbReference>
<dbReference type="EMBL" id="AY052681">
    <property type="protein sequence ID" value="AAK96585.1"/>
    <property type="molecule type" value="mRNA"/>
</dbReference>
<dbReference type="EMBL" id="AY034986">
    <property type="protein sequence ID" value="AAK59491.1"/>
    <property type="molecule type" value="mRNA"/>
</dbReference>
<dbReference type="EMBL" id="AY142577">
    <property type="protein sequence ID" value="AAN13146.1"/>
    <property type="molecule type" value="mRNA"/>
</dbReference>
<dbReference type="EMBL" id="AY088549">
    <property type="protein sequence ID" value="AAM66081.1"/>
    <property type="molecule type" value="mRNA"/>
</dbReference>
<dbReference type="PIR" id="I39698">
    <property type="entry name" value="I39698"/>
</dbReference>
<dbReference type="PIR" id="T51838">
    <property type="entry name" value="T51838"/>
</dbReference>
<dbReference type="RefSeq" id="NP_197523.1">
    <property type="nucleotide sequence ID" value="NM_122030.4"/>
</dbReference>
<dbReference type="SMR" id="Q07488"/>
<dbReference type="BioGRID" id="17421">
    <property type="interactions" value="63"/>
</dbReference>
<dbReference type="IntAct" id="Q07488">
    <property type="interactions" value="62"/>
</dbReference>
<dbReference type="STRING" id="3702.Q07488"/>
<dbReference type="GlyCosmos" id="Q07488">
    <property type="glycosylation" value="1 site, No reported glycans"/>
</dbReference>
<dbReference type="GlyGen" id="Q07488">
    <property type="glycosylation" value="4 sites"/>
</dbReference>
<dbReference type="PaxDb" id="3702-AT5G20230.1"/>
<dbReference type="ProteomicsDB" id="241131"/>
<dbReference type="EnsemblPlants" id="AT5G20230.1">
    <property type="protein sequence ID" value="AT5G20230.1"/>
    <property type="gene ID" value="AT5G20230"/>
</dbReference>
<dbReference type="GeneID" id="832145"/>
<dbReference type="Gramene" id="AT5G20230.1">
    <property type="protein sequence ID" value="AT5G20230.1"/>
    <property type="gene ID" value="AT5G20230"/>
</dbReference>
<dbReference type="KEGG" id="ath:AT5G20230"/>
<dbReference type="Araport" id="AT5G20230"/>
<dbReference type="TAIR" id="AT5G20230">
    <property type="gene designation" value="BCB"/>
</dbReference>
<dbReference type="eggNOG" id="ENOG502S4BK">
    <property type="taxonomic scope" value="Eukaryota"/>
</dbReference>
<dbReference type="HOGENOM" id="CLU_058719_2_7_1"/>
<dbReference type="InParanoid" id="Q07488"/>
<dbReference type="OMA" id="VGDHCRF"/>
<dbReference type="OrthoDB" id="5421909at2759"/>
<dbReference type="PhylomeDB" id="Q07488"/>
<dbReference type="PRO" id="PR:Q07488"/>
<dbReference type="Proteomes" id="UP000006548">
    <property type="component" value="Chromosome 5"/>
</dbReference>
<dbReference type="ExpressionAtlas" id="Q07488">
    <property type="expression patterns" value="baseline and differential"/>
</dbReference>
<dbReference type="GO" id="GO:0000325">
    <property type="term" value="C:plant-type vacuole"/>
    <property type="evidence" value="ECO:0007005"/>
    <property type="project" value="TAIR"/>
</dbReference>
<dbReference type="GO" id="GO:0005886">
    <property type="term" value="C:plasma membrane"/>
    <property type="evidence" value="ECO:0007005"/>
    <property type="project" value="TAIR"/>
</dbReference>
<dbReference type="GO" id="GO:0009536">
    <property type="term" value="C:plastid"/>
    <property type="evidence" value="ECO:0007005"/>
    <property type="project" value="TAIR"/>
</dbReference>
<dbReference type="GO" id="GO:0098552">
    <property type="term" value="C:side of membrane"/>
    <property type="evidence" value="ECO:0007669"/>
    <property type="project" value="UniProtKB-KW"/>
</dbReference>
<dbReference type="GO" id="GO:0009055">
    <property type="term" value="F:electron transfer activity"/>
    <property type="evidence" value="ECO:0007669"/>
    <property type="project" value="InterPro"/>
</dbReference>
<dbReference type="GO" id="GO:0046872">
    <property type="term" value="F:metal ion binding"/>
    <property type="evidence" value="ECO:0007669"/>
    <property type="project" value="UniProtKB-KW"/>
</dbReference>
<dbReference type="GO" id="GO:0015690">
    <property type="term" value="P:aluminum cation transport"/>
    <property type="evidence" value="ECO:0000315"/>
    <property type="project" value="TAIR"/>
</dbReference>
<dbReference type="GO" id="GO:0070417">
    <property type="term" value="P:cellular response to cold"/>
    <property type="evidence" value="ECO:0000315"/>
    <property type="project" value="TAIR"/>
</dbReference>
<dbReference type="GO" id="GO:0071456">
    <property type="term" value="P:cellular response to hypoxia"/>
    <property type="evidence" value="ECO:0007007"/>
    <property type="project" value="TAIR"/>
</dbReference>
<dbReference type="GO" id="GO:1901141">
    <property type="term" value="P:regulation of lignin biosynthetic process"/>
    <property type="evidence" value="ECO:0000315"/>
    <property type="project" value="TAIR"/>
</dbReference>
<dbReference type="GO" id="GO:0009646">
    <property type="term" value="P:response to absence of light"/>
    <property type="evidence" value="ECO:0000270"/>
    <property type="project" value="TAIR"/>
</dbReference>
<dbReference type="GO" id="GO:0002239">
    <property type="term" value="P:response to oomycetes"/>
    <property type="evidence" value="ECO:0000270"/>
    <property type="project" value="TAIR"/>
</dbReference>
<dbReference type="GO" id="GO:0006979">
    <property type="term" value="P:response to oxidative stress"/>
    <property type="evidence" value="ECO:0000304"/>
    <property type="project" value="TAIR"/>
</dbReference>
<dbReference type="CDD" id="cd13920">
    <property type="entry name" value="Stellacyanin"/>
    <property type="match status" value="1"/>
</dbReference>
<dbReference type="FunFam" id="2.60.40.420:FF:000034">
    <property type="entry name" value="Cupredoxin superfamily protein"/>
    <property type="match status" value="1"/>
</dbReference>
<dbReference type="Gene3D" id="2.60.40.420">
    <property type="entry name" value="Cupredoxins - blue copper proteins"/>
    <property type="match status" value="1"/>
</dbReference>
<dbReference type="InterPro" id="IPR028871">
    <property type="entry name" value="BlueCu_1_BS"/>
</dbReference>
<dbReference type="InterPro" id="IPR008972">
    <property type="entry name" value="Cupredoxin"/>
</dbReference>
<dbReference type="InterPro" id="IPR039391">
    <property type="entry name" value="Phytocyanin-like"/>
</dbReference>
<dbReference type="InterPro" id="IPR003245">
    <property type="entry name" value="Phytocyanin_dom"/>
</dbReference>
<dbReference type="PANTHER" id="PTHR33021">
    <property type="entry name" value="BLUE COPPER PROTEIN"/>
    <property type="match status" value="1"/>
</dbReference>
<dbReference type="PANTHER" id="PTHR33021:SF494">
    <property type="entry name" value="BLUE COPPER PROTEIN"/>
    <property type="match status" value="1"/>
</dbReference>
<dbReference type="Pfam" id="PF02298">
    <property type="entry name" value="Cu_bind_like"/>
    <property type="match status" value="1"/>
</dbReference>
<dbReference type="SUPFAM" id="SSF49503">
    <property type="entry name" value="Cupredoxins"/>
    <property type="match status" value="1"/>
</dbReference>
<dbReference type="PROSITE" id="PS00196">
    <property type="entry name" value="COPPER_BLUE"/>
    <property type="match status" value="1"/>
</dbReference>
<dbReference type="PROSITE" id="PS51485">
    <property type="entry name" value="PHYTOCYANIN"/>
    <property type="match status" value="1"/>
</dbReference>
<feature type="signal peptide" evidence="1">
    <location>
        <begin position="1"/>
        <end position="22"/>
    </location>
</feature>
<feature type="chain" id="PRO_0000002866" description="Blue copper protein">
    <location>
        <begin position="23"/>
        <end position="174"/>
    </location>
</feature>
<feature type="propeptide" id="PRO_0000002867" description="Removed in mature form" evidence="4">
    <location>
        <begin position="175"/>
        <end position="196"/>
    </location>
</feature>
<feature type="domain" description="Phytocyanin" evidence="2">
    <location>
        <begin position="23"/>
        <end position="125"/>
    </location>
</feature>
<feature type="region of interest" description="Disordered" evidence="3">
    <location>
        <begin position="133"/>
        <end position="173"/>
    </location>
</feature>
<feature type="compositionally biased region" description="Low complexity" evidence="3">
    <location>
        <begin position="135"/>
        <end position="173"/>
    </location>
</feature>
<feature type="binding site" evidence="2">
    <location>
        <position position="66"/>
    </location>
    <ligand>
        <name>Cu cation</name>
        <dbReference type="ChEBI" id="CHEBI:23378"/>
    </ligand>
</feature>
<feature type="binding site" evidence="2">
    <location>
        <position position="107"/>
    </location>
    <ligand>
        <name>Cu cation</name>
        <dbReference type="ChEBI" id="CHEBI:23378"/>
    </ligand>
</feature>
<feature type="binding site" evidence="2">
    <location>
        <position position="112"/>
    </location>
    <ligand>
        <name>Cu cation</name>
        <dbReference type="ChEBI" id="CHEBI:23378"/>
    </ligand>
</feature>
<feature type="binding site" evidence="2">
    <location>
        <position position="117"/>
    </location>
    <ligand>
        <name>Cu cation</name>
        <dbReference type="ChEBI" id="CHEBI:23378"/>
    </ligand>
</feature>
<feature type="lipid moiety-binding region" description="GPI-anchor amidated asparagine" evidence="1">
    <location>
        <position position="174"/>
    </location>
</feature>
<feature type="glycosylation site" description="N-linked (GlcNAc...) asparagine" evidence="1">
    <location>
        <position position="98"/>
    </location>
</feature>
<feature type="disulfide bond" evidence="2">
    <location>
        <begin position="79"/>
        <end position="113"/>
    </location>
</feature>
<feature type="sequence conflict" description="In Ref. 1; CAA78771." evidence="4" ref="1">
    <original>T</original>
    <variation>S</variation>
    <location>
        <position position="44"/>
    </location>
</feature>
<feature type="sequence conflict" description="In Ref. 1; CAA78771." evidence="4" ref="1">
    <original>P</original>
    <variation>L</variation>
    <location>
        <position position="134"/>
    </location>
</feature>
<feature type="sequence conflict" description="In Ref. 1; CAA78771." evidence="4" ref="1">
    <original>P</original>
    <variation>L</variation>
    <location>
        <position position="142"/>
    </location>
</feature>